<proteinExistence type="inferred from homology"/>
<evidence type="ECO:0000255" key="1">
    <source>
        <dbReference type="HAMAP-Rule" id="MF_00421"/>
    </source>
</evidence>
<evidence type="ECO:0000305" key="2"/>
<dbReference type="EC" id="6.3.5.3" evidence="1"/>
<dbReference type="EC" id="3.5.1.2" evidence="1"/>
<dbReference type="EMBL" id="AE000513">
    <property type="protein sequence ID" value="AAF09809.1"/>
    <property type="status" value="ALT_INIT"/>
    <property type="molecule type" value="Genomic_DNA"/>
</dbReference>
<dbReference type="PIR" id="D75545">
    <property type="entry name" value="D75545"/>
</dbReference>
<dbReference type="RefSeq" id="NP_293947.1">
    <property type="nucleotide sequence ID" value="NC_001263.1"/>
</dbReference>
<dbReference type="RefSeq" id="WP_027480167.1">
    <property type="nucleotide sequence ID" value="NC_001263.1"/>
</dbReference>
<dbReference type="SMR" id="Q9RXT3"/>
<dbReference type="FunCoup" id="Q9RXT3">
    <property type="interactions" value="172"/>
</dbReference>
<dbReference type="STRING" id="243230.DR_0223"/>
<dbReference type="PaxDb" id="243230-DR_0223"/>
<dbReference type="EnsemblBacteria" id="AAF09809">
    <property type="protein sequence ID" value="AAF09809"/>
    <property type="gene ID" value="DR_0223"/>
</dbReference>
<dbReference type="GeneID" id="69516454"/>
<dbReference type="KEGG" id="dra:DR_0223"/>
<dbReference type="PATRIC" id="fig|243230.17.peg.387"/>
<dbReference type="eggNOG" id="COG0047">
    <property type="taxonomic scope" value="Bacteria"/>
</dbReference>
<dbReference type="HOGENOM" id="CLU_001031_3_1_0"/>
<dbReference type="InParanoid" id="Q9RXT3"/>
<dbReference type="OrthoDB" id="9804441at2"/>
<dbReference type="UniPathway" id="UPA00074">
    <property type="reaction ID" value="UER00128"/>
</dbReference>
<dbReference type="Proteomes" id="UP000002524">
    <property type="component" value="Chromosome 1"/>
</dbReference>
<dbReference type="GO" id="GO:0005737">
    <property type="term" value="C:cytoplasm"/>
    <property type="evidence" value="ECO:0007669"/>
    <property type="project" value="UniProtKB-SubCell"/>
</dbReference>
<dbReference type="GO" id="GO:0005524">
    <property type="term" value="F:ATP binding"/>
    <property type="evidence" value="ECO:0007669"/>
    <property type="project" value="UniProtKB-KW"/>
</dbReference>
<dbReference type="GO" id="GO:0004359">
    <property type="term" value="F:glutaminase activity"/>
    <property type="evidence" value="ECO:0007669"/>
    <property type="project" value="UniProtKB-EC"/>
</dbReference>
<dbReference type="GO" id="GO:0004642">
    <property type="term" value="F:phosphoribosylformylglycinamidine synthase activity"/>
    <property type="evidence" value="ECO:0007669"/>
    <property type="project" value="UniProtKB-UniRule"/>
</dbReference>
<dbReference type="GO" id="GO:0006189">
    <property type="term" value="P:'de novo' IMP biosynthetic process"/>
    <property type="evidence" value="ECO:0007669"/>
    <property type="project" value="UniProtKB-UniRule"/>
</dbReference>
<dbReference type="CDD" id="cd01740">
    <property type="entry name" value="GATase1_FGAR_AT"/>
    <property type="match status" value="1"/>
</dbReference>
<dbReference type="Gene3D" id="3.40.50.880">
    <property type="match status" value="1"/>
</dbReference>
<dbReference type="HAMAP" id="MF_00421">
    <property type="entry name" value="PurQ"/>
    <property type="match status" value="1"/>
</dbReference>
<dbReference type="InterPro" id="IPR029062">
    <property type="entry name" value="Class_I_gatase-like"/>
</dbReference>
<dbReference type="InterPro" id="IPR010075">
    <property type="entry name" value="PRibForGlyAmidine_synth_PurQ"/>
</dbReference>
<dbReference type="NCBIfam" id="TIGR01737">
    <property type="entry name" value="FGAM_synth_I"/>
    <property type="match status" value="1"/>
</dbReference>
<dbReference type="NCBIfam" id="NF002957">
    <property type="entry name" value="PRK03619.1"/>
    <property type="match status" value="1"/>
</dbReference>
<dbReference type="PANTHER" id="PTHR47552">
    <property type="entry name" value="PHOSPHORIBOSYLFORMYLGLYCINAMIDINE SYNTHASE SUBUNIT PURQ"/>
    <property type="match status" value="1"/>
</dbReference>
<dbReference type="PANTHER" id="PTHR47552:SF1">
    <property type="entry name" value="PHOSPHORIBOSYLFORMYLGLYCINAMIDINE SYNTHASE SUBUNIT PURQ"/>
    <property type="match status" value="1"/>
</dbReference>
<dbReference type="Pfam" id="PF13507">
    <property type="entry name" value="GATase_5"/>
    <property type="match status" value="1"/>
</dbReference>
<dbReference type="PIRSF" id="PIRSF001586">
    <property type="entry name" value="FGAM_synth_I"/>
    <property type="match status" value="1"/>
</dbReference>
<dbReference type="SMART" id="SM01211">
    <property type="entry name" value="GATase_5"/>
    <property type="match status" value="1"/>
</dbReference>
<dbReference type="SUPFAM" id="SSF52317">
    <property type="entry name" value="Class I glutamine amidotransferase-like"/>
    <property type="match status" value="1"/>
</dbReference>
<dbReference type="PROSITE" id="PS51273">
    <property type="entry name" value="GATASE_TYPE_1"/>
    <property type="match status" value="1"/>
</dbReference>
<name>PURQ_DEIRA</name>
<accession>Q9RXT3</accession>
<keyword id="KW-0067">ATP-binding</keyword>
<keyword id="KW-0963">Cytoplasm</keyword>
<keyword id="KW-0315">Glutamine amidotransferase</keyword>
<keyword id="KW-0378">Hydrolase</keyword>
<keyword id="KW-0436">Ligase</keyword>
<keyword id="KW-0547">Nucleotide-binding</keyword>
<keyword id="KW-0658">Purine biosynthesis</keyword>
<keyword id="KW-1185">Reference proteome</keyword>
<protein>
    <recommendedName>
        <fullName evidence="1">Phosphoribosylformylglycinamidine synthase subunit PurQ</fullName>
        <shortName evidence="1">FGAM synthase</shortName>
        <ecNumber evidence="1">6.3.5.3</ecNumber>
    </recommendedName>
    <alternativeName>
        <fullName evidence="1">Formylglycinamide ribonucleotide amidotransferase subunit I</fullName>
        <shortName evidence="1">FGAR amidotransferase I</shortName>
        <shortName evidence="1">FGAR-AT I</shortName>
    </alternativeName>
    <alternativeName>
        <fullName evidence="1">Glutaminase PurQ</fullName>
        <ecNumber evidence="1">3.5.1.2</ecNumber>
    </alternativeName>
    <alternativeName>
        <fullName evidence="1">Phosphoribosylformylglycinamidine synthase subunit I</fullName>
    </alternativeName>
</protein>
<feature type="chain" id="PRO_0000100552" description="Phosphoribosylformylglycinamidine synthase subunit PurQ">
    <location>
        <begin position="1"/>
        <end position="221"/>
    </location>
</feature>
<feature type="domain" description="Glutamine amidotransferase type-1" evidence="1">
    <location>
        <begin position="2"/>
        <end position="221"/>
    </location>
</feature>
<feature type="active site" description="Nucleophile" evidence="1">
    <location>
        <position position="87"/>
    </location>
</feature>
<feature type="active site" evidence="1">
    <location>
        <position position="195"/>
    </location>
</feature>
<feature type="active site" evidence="1">
    <location>
        <position position="197"/>
    </location>
</feature>
<comment type="function">
    <text evidence="1">Part of the phosphoribosylformylglycinamidine synthase complex involved in the purines biosynthetic pathway. Catalyzes the ATP-dependent conversion of formylglycinamide ribonucleotide (FGAR) and glutamine to yield formylglycinamidine ribonucleotide (FGAM) and glutamate. The FGAM synthase complex is composed of three subunits. PurQ produces an ammonia molecule by converting glutamine to glutamate. PurL transfers the ammonia molecule to FGAR to form FGAM in an ATP-dependent manner. PurS interacts with PurQ and PurL and is thought to assist in the transfer of the ammonia molecule from PurQ to PurL.</text>
</comment>
<comment type="catalytic activity">
    <reaction evidence="1">
        <text>N(2)-formyl-N(1)-(5-phospho-beta-D-ribosyl)glycinamide + L-glutamine + ATP + H2O = 2-formamido-N(1)-(5-O-phospho-beta-D-ribosyl)acetamidine + L-glutamate + ADP + phosphate + H(+)</text>
        <dbReference type="Rhea" id="RHEA:17129"/>
        <dbReference type="ChEBI" id="CHEBI:15377"/>
        <dbReference type="ChEBI" id="CHEBI:15378"/>
        <dbReference type="ChEBI" id="CHEBI:29985"/>
        <dbReference type="ChEBI" id="CHEBI:30616"/>
        <dbReference type="ChEBI" id="CHEBI:43474"/>
        <dbReference type="ChEBI" id="CHEBI:58359"/>
        <dbReference type="ChEBI" id="CHEBI:147286"/>
        <dbReference type="ChEBI" id="CHEBI:147287"/>
        <dbReference type="ChEBI" id="CHEBI:456216"/>
        <dbReference type="EC" id="6.3.5.3"/>
    </reaction>
</comment>
<comment type="catalytic activity">
    <reaction evidence="1">
        <text>L-glutamine + H2O = L-glutamate + NH4(+)</text>
        <dbReference type="Rhea" id="RHEA:15889"/>
        <dbReference type="ChEBI" id="CHEBI:15377"/>
        <dbReference type="ChEBI" id="CHEBI:28938"/>
        <dbReference type="ChEBI" id="CHEBI:29985"/>
        <dbReference type="ChEBI" id="CHEBI:58359"/>
        <dbReference type="EC" id="3.5.1.2"/>
    </reaction>
</comment>
<comment type="pathway">
    <text evidence="1">Purine metabolism; IMP biosynthesis via de novo pathway; 5-amino-1-(5-phospho-D-ribosyl)imidazole from N(2)-formyl-N(1)-(5-phospho-D-ribosyl)glycinamide: step 1/2.</text>
</comment>
<comment type="subunit">
    <text evidence="1">Part of the FGAM synthase complex composed of 1 PurL, 1 PurQ and 2 PurS subunits.</text>
</comment>
<comment type="subcellular location">
    <subcellularLocation>
        <location evidence="1">Cytoplasm</location>
    </subcellularLocation>
</comment>
<comment type="sequence caution" evidence="2">
    <conflict type="erroneous initiation">
        <sequence resource="EMBL-CDS" id="AAF09809"/>
    </conflict>
    <text>Extended N-terminus.</text>
</comment>
<gene>
    <name evidence="1" type="primary">purQ</name>
    <name type="ordered locus">DR_0223</name>
</gene>
<organism>
    <name type="scientific">Deinococcus radiodurans (strain ATCC 13939 / DSM 20539 / JCM 16871 / CCUG 27074 / LMG 4051 / NBRC 15346 / NCIMB 9279 / VKM B-1422 / R1)</name>
    <dbReference type="NCBI Taxonomy" id="243230"/>
    <lineage>
        <taxon>Bacteria</taxon>
        <taxon>Thermotogati</taxon>
        <taxon>Deinococcota</taxon>
        <taxon>Deinococci</taxon>
        <taxon>Deinococcales</taxon>
        <taxon>Deinococcaceae</taxon>
        <taxon>Deinococcus</taxon>
    </lineage>
</organism>
<sequence length="221" mass="23585">MKTAVIQFPGSNCDADALHAARLLLDDGAQFVWHTETALPEGTELVFLPGGFSYGDHLRSGAIAARSPIMNAVKAHAEAGGYVLGVCNGFQVLTEAGLLPGALSRNKELHFMCKPVHLRVENNATDFSRAYGPGQIIEIPIAHGEGNYYADAATIAELEEGGRVVFRYADNPNGSLNDIAGIVNERGNVLGMMPHPERAVELLLGSEDGKGVFESLKTVKK</sequence>
<reference key="1">
    <citation type="journal article" date="1999" name="Science">
        <title>Genome sequence of the radioresistant bacterium Deinococcus radiodurans R1.</title>
        <authorList>
            <person name="White O."/>
            <person name="Eisen J.A."/>
            <person name="Heidelberg J.F."/>
            <person name="Hickey E.K."/>
            <person name="Peterson J.D."/>
            <person name="Dodson R.J."/>
            <person name="Haft D.H."/>
            <person name="Gwinn M.L."/>
            <person name="Nelson W.C."/>
            <person name="Richardson D.L."/>
            <person name="Moffat K.S."/>
            <person name="Qin H."/>
            <person name="Jiang L."/>
            <person name="Pamphile W."/>
            <person name="Crosby M."/>
            <person name="Shen M."/>
            <person name="Vamathevan J.J."/>
            <person name="Lam P."/>
            <person name="McDonald L.A."/>
            <person name="Utterback T.R."/>
            <person name="Zalewski C."/>
            <person name="Makarova K.S."/>
            <person name="Aravind L."/>
            <person name="Daly M.J."/>
            <person name="Minton K.W."/>
            <person name="Fleischmann R.D."/>
            <person name="Ketchum K.A."/>
            <person name="Nelson K.E."/>
            <person name="Salzberg S.L."/>
            <person name="Smith H.O."/>
            <person name="Venter J.C."/>
            <person name="Fraser C.M."/>
        </authorList>
    </citation>
    <scope>NUCLEOTIDE SEQUENCE [LARGE SCALE GENOMIC DNA]</scope>
    <source>
        <strain>ATCC 13939 / DSM 20539 / JCM 16871 / CCUG 27074 / LMG 4051 / NBRC 15346 / NCIMB 9279 / VKM B-1422 / R1</strain>
    </source>
</reference>